<gene>
    <name evidence="1" type="primary">hpcH</name>
    <name evidence="1" type="synonym">hpaI</name>
    <name type="ordered locus">EcolC_3707</name>
</gene>
<sequence length="262" mass="28073">MENSFKAALKAGRPQIGLWLGLSSSYSAELLAGAGFDWLLIDGEHAPNNVQTVLTQLQAIAPYPSQPVVRPSWNDPVQIKQLLDVGTQTLLVPMVQNADEAREAVRATRYPPAGIRGVGSALARASRWNRIPDYLQKANDQMCVLVQIETREAMKNLPQILDVEGVDGVFIGPADLSADMGYAGNPQHPEVQAAIEQAIVQIRESGKAPGILIANEQLAKRYLELGALFVAVGVDTTLLARAAEALAARFGAQATAVKPGVY</sequence>
<keyword id="KW-0002">3D-structure</keyword>
<keyword id="KW-0058">Aromatic hydrocarbons catabolism</keyword>
<keyword id="KW-0456">Lyase</keyword>
<keyword id="KW-0479">Metal-binding</keyword>
<evidence type="ECO:0000255" key="1">
    <source>
        <dbReference type="HAMAP-Rule" id="MF_01292"/>
    </source>
</evidence>
<evidence type="ECO:0000269" key="2">
    <source ref="2"/>
</evidence>
<evidence type="ECO:0007829" key="3">
    <source>
        <dbReference type="PDB" id="4B5S"/>
    </source>
</evidence>
<organism>
    <name type="scientific">Escherichia coli (strain ATCC 8739 / DSM 1576 / NBRC 3972 / NCIMB 8545 / WDCM 00012 / Crooks)</name>
    <dbReference type="NCBI Taxonomy" id="481805"/>
    <lineage>
        <taxon>Bacteria</taxon>
        <taxon>Pseudomonadati</taxon>
        <taxon>Pseudomonadota</taxon>
        <taxon>Gammaproteobacteria</taxon>
        <taxon>Enterobacterales</taxon>
        <taxon>Enterobacteriaceae</taxon>
        <taxon>Escherichia</taxon>
    </lineage>
</organism>
<name>HPCH_ECOLC</name>
<dbReference type="EC" id="4.1.2.52" evidence="1"/>
<dbReference type="EMBL" id="CP000946">
    <property type="protein sequence ID" value="ACA79318.1"/>
    <property type="molecule type" value="Genomic_DNA"/>
</dbReference>
<dbReference type="RefSeq" id="WP_000431706.1">
    <property type="nucleotide sequence ID" value="NZ_MTFT01000024.1"/>
</dbReference>
<dbReference type="PDB" id="4B5S">
    <property type="method" value="X-ray"/>
    <property type="resolution" value="1.68 A"/>
    <property type="chains" value="A/B=1-251"/>
</dbReference>
<dbReference type="PDB" id="4B5T">
    <property type="method" value="X-ray"/>
    <property type="resolution" value="1.92 A"/>
    <property type="chains" value="A/B=1-251"/>
</dbReference>
<dbReference type="PDB" id="4B5U">
    <property type="method" value="X-ray"/>
    <property type="resolution" value="1.91 A"/>
    <property type="chains" value="A/B=1-251"/>
</dbReference>
<dbReference type="PDB" id="4B5V">
    <property type="method" value="X-ray"/>
    <property type="resolution" value="2.04 A"/>
    <property type="chains" value="A/B=1-251"/>
</dbReference>
<dbReference type="PDB" id="4B5W">
    <property type="method" value="X-ray"/>
    <property type="resolution" value="1.79 A"/>
    <property type="chains" value="A/B/C/D/E/F=1-256"/>
</dbReference>
<dbReference type="PDB" id="4B5X">
    <property type="method" value="X-ray"/>
    <property type="resolution" value="1.80 A"/>
    <property type="chains" value="A/B=1-262"/>
</dbReference>
<dbReference type="PDBsum" id="4B5S"/>
<dbReference type="PDBsum" id="4B5T"/>
<dbReference type="PDBsum" id="4B5U"/>
<dbReference type="PDBsum" id="4B5V"/>
<dbReference type="PDBsum" id="4B5W"/>
<dbReference type="PDBsum" id="4B5X"/>
<dbReference type="SMR" id="B1IS70"/>
<dbReference type="GeneID" id="75202969"/>
<dbReference type="KEGG" id="ecl:EcolC_3707"/>
<dbReference type="HOGENOM" id="CLU_059964_1_0_6"/>
<dbReference type="BRENDA" id="4.1.2.52">
    <property type="organism ID" value="2026"/>
</dbReference>
<dbReference type="UniPathway" id="UPA00208">
    <property type="reaction ID" value="UER00422"/>
</dbReference>
<dbReference type="EvolutionaryTrace" id="B1IS70"/>
<dbReference type="GO" id="GO:0005737">
    <property type="term" value="C:cytoplasm"/>
    <property type="evidence" value="ECO:0007669"/>
    <property type="project" value="TreeGrafter"/>
</dbReference>
<dbReference type="GO" id="GO:0061677">
    <property type="term" value="F:2-dehydro-3-deoxy-D-gluconate aldolase activity"/>
    <property type="evidence" value="ECO:0007669"/>
    <property type="project" value="RHEA"/>
</dbReference>
<dbReference type="GO" id="GO:0043863">
    <property type="term" value="F:4-hydroxy-2-ketopimelate aldolase activity"/>
    <property type="evidence" value="ECO:0007669"/>
    <property type="project" value="RHEA"/>
</dbReference>
<dbReference type="GO" id="GO:0046872">
    <property type="term" value="F:metal ion binding"/>
    <property type="evidence" value="ECO:0007669"/>
    <property type="project" value="UniProtKB-UniRule"/>
</dbReference>
<dbReference type="GO" id="GO:1901023">
    <property type="term" value="P:4-hydroxyphenylacetate catabolic process"/>
    <property type="evidence" value="ECO:0007669"/>
    <property type="project" value="UniProtKB-UniRule"/>
</dbReference>
<dbReference type="GO" id="GO:0010124">
    <property type="term" value="P:phenylacetate catabolic process"/>
    <property type="evidence" value="ECO:0007669"/>
    <property type="project" value="InterPro"/>
</dbReference>
<dbReference type="FunFam" id="3.20.20.60:FF:000004">
    <property type="entry name" value="5-keto-4-deoxy-D-glucarate aldolase"/>
    <property type="match status" value="1"/>
</dbReference>
<dbReference type="Gene3D" id="3.20.20.60">
    <property type="entry name" value="Phosphoenolpyruvate-binding domains"/>
    <property type="match status" value="1"/>
</dbReference>
<dbReference type="HAMAP" id="MF_01292">
    <property type="entry name" value="HKHD_aldolase"/>
    <property type="match status" value="1"/>
</dbReference>
<dbReference type="InterPro" id="IPR005000">
    <property type="entry name" value="Aldolase/citrate-lyase_domain"/>
</dbReference>
<dbReference type="InterPro" id="IPR023701">
    <property type="entry name" value="HKHD_aldolase_ent"/>
</dbReference>
<dbReference type="InterPro" id="IPR012689">
    <property type="entry name" value="HpaI"/>
</dbReference>
<dbReference type="InterPro" id="IPR050251">
    <property type="entry name" value="HpcH-HpaI_aldolase"/>
</dbReference>
<dbReference type="InterPro" id="IPR015813">
    <property type="entry name" value="Pyrv/PenolPyrv_kinase-like_dom"/>
</dbReference>
<dbReference type="InterPro" id="IPR040442">
    <property type="entry name" value="Pyrv_kinase-like_dom_sf"/>
</dbReference>
<dbReference type="NCBIfam" id="TIGR02311">
    <property type="entry name" value="HpaI"/>
    <property type="match status" value="1"/>
</dbReference>
<dbReference type="PANTHER" id="PTHR30502">
    <property type="entry name" value="2-KETO-3-DEOXY-L-RHAMNONATE ALDOLASE"/>
    <property type="match status" value="1"/>
</dbReference>
<dbReference type="PANTHER" id="PTHR30502:SF0">
    <property type="entry name" value="PHOSPHOENOLPYRUVATE CARBOXYLASE FAMILY PROTEIN"/>
    <property type="match status" value="1"/>
</dbReference>
<dbReference type="Pfam" id="PF03328">
    <property type="entry name" value="HpcH_HpaI"/>
    <property type="match status" value="1"/>
</dbReference>
<dbReference type="SUPFAM" id="SSF51621">
    <property type="entry name" value="Phosphoenolpyruvate/pyruvate domain"/>
    <property type="match status" value="1"/>
</dbReference>
<feature type="chain" id="PRO_0000355103" description="4-hydroxy-2-oxo-heptane-1,7-dioate aldolase">
    <location>
        <begin position="1"/>
        <end position="262"/>
    </location>
</feature>
<feature type="active site" description="Proton acceptor" evidence="1">
    <location>
        <position position="45"/>
    </location>
</feature>
<feature type="binding site" evidence="1">
    <location>
        <position position="147"/>
    </location>
    <ligand>
        <name>substrate</name>
    </ligand>
</feature>
<feature type="binding site" evidence="1">
    <location>
        <position position="149"/>
    </location>
    <ligand>
        <name>a divalent metal cation</name>
        <dbReference type="ChEBI" id="CHEBI:60240"/>
    </ligand>
</feature>
<feature type="binding site" evidence="1">
    <location>
        <position position="174"/>
    </location>
    <ligand>
        <name>substrate</name>
    </ligand>
</feature>
<feature type="binding site" evidence="1">
    <location>
        <position position="175"/>
    </location>
    <ligand>
        <name>a divalent metal cation</name>
        <dbReference type="ChEBI" id="CHEBI:60240"/>
    </ligand>
</feature>
<feature type="binding site" evidence="1">
    <location>
        <position position="175"/>
    </location>
    <ligand>
        <name>substrate</name>
    </ligand>
</feature>
<feature type="site" description="Transition state stabilizer" evidence="1">
    <location>
        <position position="70"/>
    </location>
</feature>
<feature type="site" description="Increases basicity of active site His" evidence="1">
    <location>
        <position position="84"/>
    </location>
</feature>
<feature type="helix" evidence="3">
    <location>
        <begin position="4"/>
        <end position="10"/>
    </location>
</feature>
<feature type="strand" evidence="3">
    <location>
        <begin position="15"/>
        <end position="20"/>
    </location>
</feature>
<feature type="helix" evidence="3">
    <location>
        <begin position="25"/>
        <end position="32"/>
    </location>
</feature>
<feature type="strand" evidence="3">
    <location>
        <begin position="37"/>
        <end position="42"/>
    </location>
</feature>
<feature type="turn" evidence="3">
    <location>
        <begin position="43"/>
        <end position="45"/>
    </location>
</feature>
<feature type="helix" evidence="3">
    <location>
        <begin position="50"/>
        <end position="60"/>
    </location>
</feature>
<feature type="strand" evidence="3">
    <location>
        <begin position="63"/>
        <end position="70"/>
    </location>
</feature>
<feature type="strand" evidence="3">
    <location>
        <begin position="72"/>
        <end position="74"/>
    </location>
</feature>
<feature type="helix" evidence="3">
    <location>
        <begin position="76"/>
        <end position="84"/>
    </location>
</feature>
<feature type="strand" evidence="3">
    <location>
        <begin position="89"/>
        <end position="93"/>
    </location>
</feature>
<feature type="helix" evidence="3">
    <location>
        <begin position="98"/>
        <end position="107"/>
    </location>
</feature>
<feature type="turn" evidence="3">
    <location>
        <begin position="111"/>
        <end position="113"/>
    </location>
</feature>
<feature type="helix" evidence="3">
    <location>
        <begin position="120"/>
        <end position="122"/>
    </location>
</feature>
<feature type="helix" evidence="3">
    <location>
        <begin position="124"/>
        <end position="126"/>
    </location>
</feature>
<feature type="turn" evidence="3">
    <location>
        <begin position="127"/>
        <end position="130"/>
    </location>
</feature>
<feature type="helix" evidence="3">
    <location>
        <begin position="134"/>
        <end position="137"/>
    </location>
</feature>
<feature type="helix" evidence="3">
    <location>
        <begin position="139"/>
        <end position="141"/>
    </location>
</feature>
<feature type="strand" evidence="3">
    <location>
        <begin position="143"/>
        <end position="148"/>
    </location>
</feature>
<feature type="helix" evidence="3">
    <location>
        <begin position="151"/>
        <end position="155"/>
    </location>
</feature>
<feature type="helix" evidence="3">
    <location>
        <begin position="157"/>
        <end position="161"/>
    </location>
</feature>
<feature type="strand" evidence="3">
    <location>
        <begin position="166"/>
        <end position="171"/>
    </location>
</feature>
<feature type="helix" evidence="3">
    <location>
        <begin position="173"/>
        <end position="180"/>
    </location>
</feature>
<feature type="helix" evidence="3">
    <location>
        <begin position="189"/>
        <end position="204"/>
    </location>
</feature>
<feature type="strand" evidence="3">
    <location>
        <begin position="207"/>
        <end position="212"/>
    </location>
</feature>
<feature type="helix" evidence="3">
    <location>
        <begin position="216"/>
        <end position="224"/>
    </location>
</feature>
<feature type="strand" evidence="3">
    <location>
        <begin position="228"/>
        <end position="234"/>
    </location>
</feature>
<feature type="helix" evidence="3">
    <location>
        <begin position="235"/>
        <end position="249"/>
    </location>
</feature>
<reference key="1">
    <citation type="submission" date="2008-02" db="EMBL/GenBank/DDBJ databases">
        <title>Complete sequence of Escherichia coli C str. ATCC 8739.</title>
        <authorList>
            <person name="Copeland A."/>
            <person name="Lucas S."/>
            <person name="Lapidus A."/>
            <person name="Glavina del Rio T."/>
            <person name="Dalin E."/>
            <person name="Tice H."/>
            <person name="Bruce D."/>
            <person name="Goodwin L."/>
            <person name="Pitluck S."/>
            <person name="Kiss H."/>
            <person name="Brettin T."/>
            <person name="Detter J.C."/>
            <person name="Han C."/>
            <person name="Kuske C.R."/>
            <person name="Schmutz J."/>
            <person name="Larimer F."/>
            <person name="Land M."/>
            <person name="Hauser L."/>
            <person name="Kyrpides N."/>
            <person name="Mikhailova N."/>
            <person name="Ingram L."/>
            <person name="Richardson P."/>
        </authorList>
    </citation>
    <scope>NUCLEOTIDE SEQUENCE [LARGE SCALE GENOMIC DNA]</scope>
    <source>
        <strain>ATCC 8739 / DSM 1576 / NBRC 3972 / NCIMB 8545 / WDCM 00012 / Crooks</strain>
    </source>
</reference>
<reference key="2">
    <citation type="journal article" date="2017" name="Green Chem.">
        <title>Expanding the reaction space of aldolases using hydroxypyruvate as a nucleophilic substrate.</title>
        <authorList>
            <person name="de Berardinis V."/>
            <person name="Guerard-Helaine C."/>
            <person name="Darii E."/>
            <person name="Bastard K."/>
            <person name="Helaine V."/>
            <person name="Mariage A."/>
            <person name="Petit J.-L."/>
            <person name="Poupard N."/>
            <person name="Sanchez-Moreno I."/>
            <person name="Stam M."/>
            <person name="Gefflaut T."/>
            <person name="Salanoubat M."/>
            <person name="Lemaire M."/>
        </authorList>
    </citation>
    <scope>FUNCTION</scope>
    <scope>CATALYTIC ACTIVITY</scope>
</reference>
<accession>B1IS70</accession>
<protein>
    <recommendedName>
        <fullName evidence="1">4-hydroxy-2-oxo-heptane-1,7-dioate aldolase</fullName>
        <ecNumber evidence="1">4.1.2.52</ecNumber>
    </recommendedName>
    <alternativeName>
        <fullName evidence="1">2,4-dihydroxyhept-2-ene-1,7-dioic acid aldolase</fullName>
        <shortName evidence="1">HHED aldolase</shortName>
    </alternativeName>
    <alternativeName>
        <fullName evidence="1">4-hydroxy-2-ketoheptane-1,7-dioate aldolase</fullName>
        <shortName evidence="1">HKHD aldolase</shortName>
    </alternativeName>
</protein>
<proteinExistence type="evidence at protein level"/>
<comment type="function">
    <text evidence="1 2">Catalyzes the reversible retro-aldol cleavage of 4-hydroxy-2-ketoheptane-1,7-dioate (HKHD) to pyruvate and succinic semialdehyde (By similarity). In vitro, can catalyze the aldolisation reaction between hydroxypyruvate (HPA) or pyruvate (PA) and D-glyceraldehyde (D-GA) (Ref.2). The condensation of hydroxypyruvate and D-glyceraldehyde produces (3R,4S,5R)-3,4,5,6-tetrahydroxy-2-oxohexanoate as the major product, 2-dehydro-D-gluconate and 2-dehydro-D-galactonate (Ref.2). The condensation of pyruvate and D-glyceraldehyde produces 2-dehydro-3-deoxy-L-galactonate as the major product and 2-dehydro-3-deoxy-D-gluconate (Ref.2).</text>
</comment>
<comment type="catalytic activity">
    <reaction evidence="1">
        <text>4-hydroxy-2-oxoheptanedioate = succinate semialdehyde + pyruvate</text>
        <dbReference type="Rhea" id="RHEA:25788"/>
        <dbReference type="ChEBI" id="CHEBI:15361"/>
        <dbReference type="ChEBI" id="CHEBI:57706"/>
        <dbReference type="ChEBI" id="CHEBI:73036"/>
        <dbReference type="EC" id="4.1.2.52"/>
    </reaction>
</comment>
<comment type="catalytic activity">
    <reaction evidence="2">
        <text>D-glyceraldehyde + 3-hydroxypyruvate = (3R,4S,5R)-3,4,5,6-tetrahydroxy-2-oxohexanoate</text>
        <dbReference type="Rhea" id="RHEA:80047"/>
        <dbReference type="ChEBI" id="CHEBI:17180"/>
        <dbReference type="ChEBI" id="CHEBI:17378"/>
        <dbReference type="ChEBI" id="CHEBI:231434"/>
    </reaction>
</comment>
<comment type="catalytic activity">
    <reaction evidence="2">
        <text>D-glyceraldehyde + 3-hydroxypyruvate = 2-dehydro-D-gluconate</text>
        <dbReference type="Rhea" id="RHEA:80043"/>
        <dbReference type="ChEBI" id="CHEBI:16808"/>
        <dbReference type="ChEBI" id="CHEBI:17180"/>
        <dbReference type="ChEBI" id="CHEBI:17378"/>
    </reaction>
</comment>
<comment type="catalytic activity">
    <reaction evidence="2">
        <text>D-glyceraldehyde + 3-hydroxypyruvate = 2-dehydro-D-galactonate</text>
        <dbReference type="Rhea" id="RHEA:80051"/>
        <dbReference type="ChEBI" id="CHEBI:17180"/>
        <dbReference type="ChEBI" id="CHEBI:17378"/>
        <dbReference type="ChEBI" id="CHEBI:28023"/>
    </reaction>
</comment>
<comment type="catalytic activity">
    <reaction evidence="2">
        <text>D-glyceraldehyde + pyruvate = 2-dehydro-3-deoxy-L-galactonate</text>
        <dbReference type="Rhea" id="RHEA:80055"/>
        <dbReference type="ChEBI" id="CHEBI:15361"/>
        <dbReference type="ChEBI" id="CHEBI:17378"/>
        <dbReference type="ChEBI" id="CHEBI:75545"/>
    </reaction>
</comment>
<comment type="catalytic activity">
    <reaction evidence="2">
        <text>2-dehydro-3-deoxy-D-gluconate = D-glyceraldehyde + pyruvate</text>
        <dbReference type="Rhea" id="RHEA:35583"/>
        <dbReference type="ChEBI" id="CHEBI:15361"/>
        <dbReference type="ChEBI" id="CHEBI:17378"/>
        <dbReference type="ChEBI" id="CHEBI:57990"/>
    </reaction>
</comment>
<comment type="cofactor">
    <cofactor evidence="1">
        <name>a divalent metal cation</name>
        <dbReference type="ChEBI" id="CHEBI:60240"/>
    </cofactor>
    <text evidence="1">Binds 1 divalent metal cation per subunit.</text>
</comment>
<comment type="pathway">
    <text evidence="1">Aromatic compound metabolism; 4-hydroxyphenylacetate degradation; pyruvate and succinate semialdehyde from 4-hydroxyphenylacetate: step 7/7.</text>
</comment>
<comment type="subunit">
    <text evidence="1">Homohexamer; trimer of dimers.</text>
</comment>
<comment type="similarity">
    <text evidence="1">Belongs to the HpcH/HpaI aldolase family.</text>
</comment>